<feature type="chain" id="PRO_1000071728" description="Lipoyl synthase">
    <location>
        <begin position="1"/>
        <end position="290"/>
    </location>
</feature>
<feature type="domain" description="Radical SAM core" evidence="2">
    <location>
        <begin position="56"/>
        <end position="271"/>
    </location>
</feature>
<feature type="binding site" evidence="1">
    <location>
        <position position="44"/>
    </location>
    <ligand>
        <name>[4Fe-4S] cluster</name>
        <dbReference type="ChEBI" id="CHEBI:49883"/>
        <label>1</label>
    </ligand>
</feature>
<feature type="binding site" evidence="1">
    <location>
        <position position="49"/>
    </location>
    <ligand>
        <name>[4Fe-4S] cluster</name>
        <dbReference type="ChEBI" id="CHEBI:49883"/>
        <label>1</label>
    </ligand>
</feature>
<feature type="binding site" evidence="1">
    <location>
        <position position="55"/>
    </location>
    <ligand>
        <name>[4Fe-4S] cluster</name>
        <dbReference type="ChEBI" id="CHEBI:49883"/>
        <label>1</label>
    </ligand>
</feature>
<feature type="binding site" evidence="1">
    <location>
        <position position="70"/>
    </location>
    <ligand>
        <name>[4Fe-4S] cluster</name>
        <dbReference type="ChEBI" id="CHEBI:49883"/>
        <label>2</label>
        <note>4Fe-4S-S-AdoMet</note>
    </ligand>
</feature>
<feature type="binding site" evidence="1">
    <location>
        <position position="74"/>
    </location>
    <ligand>
        <name>[4Fe-4S] cluster</name>
        <dbReference type="ChEBI" id="CHEBI:49883"/>
        <label>2</label>
        <note>4Fe-4S-S-AdoMet</note>
    </ligand>
</feature>
<feature type="binding site" evidence="1">
    <location>
        <position position="77"/>
    </location>
    <ligand>
        <name>[4Fe-4S] cluster</name>
        <dbReference type="ChEBI" id="CHEBI:49883"/>
        <label>2</label>
        <note>4Fe-4S-S-AdoMet</note>
    </ligand>
</feature>
<feature type="binding site" evidence="1">
    <location>
        <position position="282"/>
    </location>
    <ligand>
        <name>[4Fe-4S] cluster</name>
        <dbReference type="ChEBI" id="CHEBI:49883"/>
        <label>1</label>
    </ligand>
</feature>
<proteinExistence type="inferred from homology"/>
<accession>A6GZL9</accession>
<organism>
    <name type="scientific">Flavobacterium psychrophilum (strain ATCC 49511 / DSM 21280 / CIP 103535 / JIP02/86)</name>
    <dbReference type="NCBI Taxonomy" id="402612"/>
    <lineage>
        <taxon>Bacteria</taxon>
        <taxon>Pseudomonadati</taxon>
        <taxon>Bacteroidota</taxon>
        <taxon>Flavobacteriia</taxon>
        <taxon>Flavobacteriales</taxon>
        <taxon>Flavobacteriaceae</taxon>
        <taxon>Flavobacterium</taxon>
    </lineage>
</organism>
<protein>
    <recommendedName>
        <fullName evidence="1">Lipoyl synthase</fullName>
        <ecNumber evidence="1">2.8.1.8</ecNumber>
    </recommendedName>
    <alternativeName>
        <fullName evidence="1">Lip-syn</fullName>
        <shortName evidence="1">LS</shortName>
    </alternativeName>
    <alternativeName>
        <fullName evidence="1">Lipoate synthase</fullName>
    </alternativeName>
    <alternativeName>
        <fullName evidence="1">Lipoic acid synthase</fullName>
    </alternativeName>
    <alternativeName>
        <fullName evidence="1">Sulfur insertion protein LipA</fullName>
    </alternativeName>
</protein>
<reference key="1">
    <citation type="journal article" date="2007" name="Nat. Biotechnol.">
        <title>Complete genome sequence of the fish pathogen Flavobacterium psychrophilum.</title>
        <authorList>
            <person name="Duchaud E."/>
            <person name="Boussaha M."/>
            <person name="Loux V."/>
            <person name="Bernardet J.-F."/>
            <person name="Michel C."/>
            <person name="Kerouault B."/>
            <person name="Mondot S."/>
            <person name="Nicolas P."/>
            <person name="Bossy R."/>
            <person name="Caron C."/>
            <person name="Bessieres P."/>
            <person name="Gibrat J.-F."/>
            <person name="Claverol S."/>
            <person name="Dumetz F."/>
            <person name="Le Henaff M."/>
            <person name="Benmansour A."/>
        </authorList>
    </citation>
    <scope>NUCLEOTIDE SEQUENCE [LARGE SCALE GENOMIC DNA]</scope>
    <source>
        <strain>ATCC 49511 / DSM 21280 / CIP 103535 / JIP02/86</strain>
    </source>
</reference>
<gene>
    <name evidence="1" type="primary">lipA</name>
    <name type="ordered locus">FP1469</name>
</gene>
<comment type="function">
    <text evidence="1">Catalyzes the radical-mediated insertion of two sulfur atoms into the C-6 and C-8 positions of the octanoyl moiety bound to the lipoyl domains of lipoate-dependent enzymes, thereby converting the octanoylated domains into lipoylated derivatives.</text>
</comment>
<comment type="catalytic activity">
    <reaction evidence="1">
        <text>[[Fe-S] cluster scaffold protein carrying a second [4Fe-4S](2+) cluster] + N(6)-octanoyl-L-lysyl-[protein] + 2 oxidized [2Fe-2S]-[ferredoxin] + 2 S-adenosyl-L-methionine + 4 H(+) = [[Fe-S] cluster scaffold protein] + N(6)-[(R)-dihydrolipoyl]-L-lysyl-[protein] + 4 Fe(3+) + 2 hydrogen sulfide + 2 5'-deoxyadenosine + 2 L-methionine + 2 reduced [2Fe-2S]-[ferredoxin]</text>
        <dbReference type="Rhea" id="RHEA:16585"/>
        <dbReference type="Rhea" id="RHEA-COMP:9928"/>
        <dbReference type="Rhea" id="RHEA-COMP:10000"/>
        <dbReference type="Rhea" id="RHEA-COMP:10001"/>
        <dbReference type="Rhea" id="RHEA-COMP:10475"/>
        <dbReference type="Rhea" id="RHEA-COMP:14568"/>
        <dbReference type="Rhea" id="RHEA-COMP:14569"/>
        <dbReference type="ChEBI" id="CHEBI:15378"/>
        <dbReference type="ChEBI" id="CHEBI:17319"/>
        <dbReference type="ChEBI" id="CHEBI:29034"/>
        <dbReference type="ChEBI" id="CHEBI:29919"/>
        <dbReference type="ChEBI" id="CHEBI:33722"/>
        <dbReference type="ChEBI" id="CHEBI:33737"/>
        <dbReference type="ChEBI" id="CHEBI:33738"/>
        <dbReference type="ChEBI" id="CHEBI:57844"/>
        <dbReference type="ChEBI" id="CHEBI:59789"/>
        <dbReference type="ChEBI" id="CHEBI:78809"/>
        <dbReference type="ChEBI" id="CHEBI:83100"/>
        <dbReference type="EC" id="2.8.1.8"/>
    </reaction>
</comment>
<comment type="cofactor">
    <cofactor evidence="1">
        <name>[4Fe-4S] cluster</name>
        <dbReference type="ChEBI" id="CHEBI:49883"/>
    </cofactor>
    <text evidence="1">Binds 2 [4Fe-4S] clusters per subunit. One cluster is coordinated with 3 cysteines and an exchangeable S-adenosyl-L-methionine.</text>
</comment>
<comment type="pathway">
    <text evidence="1">Protein modification; protein lipoylation via endogenous pathway; protein N(6)-(lipoyl)lysine from octanoyl-[acyl-carrier-protein]: step 2/2.</text>
</comment>
<comment type="subcellular location">
    <subcellularLocation>
        <location evidence="1">Cytoplasm</location>
    </subcellularLocation>
</comment>
<comment type="similarity">
    <text evidence="1">Belongs to the radical SAM superfamily. Lipoyl synthase family.</text>
</comment>
<name>LIPA_FLAPJ</name>
<dbReference type="EC" id="2.8.1.8" evidence="1"/>
<dbReference type="EMBL" id="AM398681">
    <property type="protein sequence ID" value="CAL43542.1"/>
    <property type="molecule type" value="Genomic_DNA"/>
</dbReference>
<dbReference type="RefSeq" id="WP_011963587.1">
    <property type="nucleotide sequence ID" value="NC_009613.3"/>
</dbReference>
<dbReference type="RefSeq" id="YP_001296351.1">
    <property type="nucleotide sequence ID" value="NC_009613.3"/>
</dbReference>
<dbReference type="SMR" id="A6GZL9"/>
<dbReference type="STRING" id="402612.FP1469"/>
<dbReference type="EnsemblBacteria" id="CAL43542">
    <property type="protein sequence ID" value="CAL43542"/>
    <property type="gene ID" value="FP1469"/>
</dbReference>
<dbReference type="GeneID" id="66552927"/>
<dbReference type="KEGG" id="fps:FP1469"/>
<dbReference type="PATRIC" id="fig|402612.5.peg.1481"/>
<dbReference type="eggNOG" id="COG0320">
    <property type="taxonomic scope" value="Bacteria"/>
</dbReference>
<dbReference type="HOGENOM" id="CLU_033144_2_1_10"/>
<dbReference type="OrthoDB" id="9787898at2"/>
<dbReference type="UniPathway" id="UPA00538">
    <property type="reaction ID" value="UER00593"/>
</dbReference>
<dbReference type="Proteomes" id="UP000006394">
    <property type="component" value="Chromosome"/>
</dbReference>
<dbReference type="GO" id="GO:0005737">
    <property type="term" value="C:cytoplasm"/>
    <property type="evidence" value="ECO:0007669"/>
    <property type="project" value="UniProtKB-SubCell"/>
</dbReference>
<dbReference type="GO" id="GO:0051539">
    <property type="term" value="F:4 iron, 4 sulfur cluster binding"/>
    <property type="evidence" value="ECO:0007669"/>
    <property type="project" value="UniProtKB-UniRule"/>
</dbReference>
<dbReference type="GO" id="GO:0016992">
    <property type="term" value="F:lipoate synthase activity"/>
    <property type="evidence" value="ECO:0007669"/>
    <property type="project" value="UniProtKB-UniRule"/>
</dbReference>
<dbReference type="GO" id="GO:0046872">
    <property type="term" value="F:metal ion binding"/>
    <property type="evidence" value="ECO:0007669"/>
    <property type="project" value="UniProtKB-KW"/>
</dbReference>
<dbReference type="CDD" id="cd01335">
    <property type="entry name" value="Radical_SAM"/>
    <property type="match status" value="1"/>
</dbReference>
<dbReference type="FunFam" id="3.20.20.70:FF:000040">
    <property type="entry name" value="Lipoyl synthase"/>
    <property type="match status" value="1"/>
</dbReference>
<dbReference type="Gene3D" id="3.20.20.70">
    <property type="entry name" value="Aldolase class I"/>
    <property type="match status" value="1"/>
</dbReference>
<dbReference type="HAMAP" id="MF_00206">
    <property type="entry name" value="Lipoyl_synth"/>
    <property type="match status" value="1"/>
</dbReference>
<dbReference type="InterPro" id="IPR013785">
    <property type="entry name" value="Aldolase_TIM"/>
</dbReference>
<dbReference type="InterPro" id="IPR006638">
    <property type="entry name" value="Elp3/MiaA/NifB-like_rSAM"/>
</dbReference>
<dbReference type="InterPro" id="IPR003698">
    <property type="entry name" value="Lipoyl_synth"/>
</dbReference>
<dbReference type="InterPro" id="IPR007197">
    <property type="entry name" value="rSAM"/>
</dbReference>
<dbReference type="NCBIfam" id="TIGR00510">
    <property type="entry name" value="lipA"/>
    <property type="match status" value="1"/>
</dbReference>
<dbReference type="NCBIfam" id="NF004019">
    <property type="entry name" value="PRK05481.1"/>
    <property type="match status" value="1"/>
</dbReference>
<dbReference type="NCBIfam" id="NF009544">
    <property type="entry name" value="PRK12928.1"/>
    <property type="match status" value="1"/>
</dbReference>
<dbReference type="PANTHER" id="PTHR10949">
    <property type="entry name" value="LIPOYL SYNTHASE"/>
    <property type="match status" value="1"/>
</dbReference>
<dbReference type="PANTHER" id="PTHR10949:SF0">
    <property type="entry name" value="LIPOYL SYNTHASE, MITOCHONDRIAL"/>
    <property type="match status" value="1"/>
</dbReference>
<dbReference type="Pfam" id="PF04055">
    <property type="entry name" value="Radical_SAM"/>
    <property type="match status" value="1"/>
</dbReference>
<dbReference type="PIRSF" id="PIRSF005963">
    <property type="entry name" value="Lipoyl_synth"/>
    <property type="match status" value="1"/>
</dbReference>
<dbReference type="SFLD" id="SFLDF00271">
    <property type="entry name" value="lipoyl_synthase"/>
    <property type="match status" value="1"/>
</dbReference>
<dbReference type="SFLD" id="SFLDS00029">
    <property type="entry name" value="Radical_SAM"/>
    <property type="match status" value="1"/>
</dbReference>
<dbReference type="SMART" id="SM00729">
    <property type="entry name" value="Elp3"/>
    <property type="match status" value="1"/>
</dbReference>
<dbReference type="SUPFAM" id="SSF102114">
    <property type="entry name" value="Radical SAM enzymes"/>
    <property type="match status" value="1"/>
</dbReference>
<dbReference type="PROSITE" id="PS51918">
    <property type="entry name" value="RADICAL_SAM"/>
    <property type="match status" value="1"/>
</dbReference>
<evidence type="ECO:0000255" key="1">
    <source>
        <dbReference type="HAMAP-Rule" id="MF_00206"/>
    </source>
</evidence>
<evidence type="ECO:0000255" key="2">
    <source>
        <dbReference type="PROSITE-ProRule" id="PRU01266"/>
    </source>
</evidence>
<sequence>METVLDSNILPVGKPKWLKVKLPIGQKYTELRGLVDKYKLNTICTSGSCPNMGECWGEGTATFMILGNICTRSCGFCGVKTGRPETVDWDEPEKVARSIKIMNIKHAVITSVDRDDLKDMGSIIWIETVKAIRRMNPETTLETLIPDFQGVERNLDRIVAANPEVVSHNVETVRRLTREVRIQAKYDKSLEVLRYLKAKGIKRTKSGIMLGLGETEEEVIQTMRDLREANVDIVTIGQYLQPSKKHLPVKEFITPEQFEKYELLGKEMGFRHVESGPLVRSSYHAQKHIL</sequence>
<keyword id="KW-0004">4Fe-4S</keyword>
<keyword id="KW-0963">Cytoplasm</keyword>
<keyword id="KW-0408">Iron</keyword>
<keyword id="KW-0411">Iron-sulfur</keyword>
<keyword id="KW-0479">Metal-binding</keyword>
<keyword id="KW-1185">Reference proteome</keyword>
<keyword id="KW-0949">S-adenosyl-L-methionine</keyword>
<keyword id="KW-0808">Transferase</keyword>